<name>NTRB_AZOBR</name>
<accession>P45670</accession>
<sequence length="400" mass="43406">MARASAAAPLPRRPARPRAPSSSYRPVRPCIDPSVMLNALPDPVLVVDGSGDIRYVNLEAQEFFGLSAAMMEGMPLAELLPPNSPVSQLIEQVQQGRHRASQEGVVIDTPRIGPHHVTVRVTALGEPADHVLLTVNERTLARKIDNSLTHRNAARSVTAMASMLGHEVKNPLSGIRGAAQLLEENCSESDRVLTRLICDEADRIVALVNRMEVFSDQRPLERDAVNIHTVLEHVRKVAQSGFARNIRFIERYDPSLPPVYGNRDQLIQIFLNLIKNAAEAAPESGGEIILSTSYQHGVRMALPGGDTRLHLPLLVSVQDNGDGIPDDLRSNLFDAFITTKVNGTGLGLALVAKIVGDHGGVIEFDSQPRRTVFKVSLPMFDEAQMSGDPAPARGIRGAIG</sequence>
<keyword id="KW-0067">ATP-binding</keyword>
<keyword id="KW-0963">Cytoplasm</keyword>
<keyword id="KW-0378">Hydrolase</keyword>
<keyword id="KW-0418">Kinase</keyword>
<keyword id="KW-0535">Nitrogen fixation</keyword>
<keyword id="KW-0547">Nucleotide-binding</keyword>
<keyword id="KW-0597">Phosphoprotein</keyword>
<keyword id="KW-0808">Transferase</keyword>
<keyword id="KW-0902">Two-component regulatory system</keyword>
<organism>
    <name type="scientific">Azospirillum brasilense</name>
    <dbReference type="NCBI Taxonomy" id="192"/>
    <lineage>
        <taxon>Bacteria</taxon>
        <taxon>Pseudomonadati</taxon>
        <taxon>Pseudomonadota</taxon>
        <taxon>Alphaproteobacteria</taxon>
        <taxon>Rhodospirillales</taxon>
        <taxon>Azospirillaceae</taxon>
        <taxon>Azospirillum</taxon>
    </lineage>
</organism>
<comment type="function">
    <text evidence="1">Member of the two-component regulatory system NtrB/NtrC, which controls expression of the nitrogen-regulated (ntr) genes in response to nitrogen limitation. Under conditions of nitrogen limitation, NtrB autophosphorylates and transfers the phosphoryl group to NtrC. In the presence of nitrogen, acts as a phosphatase that dephosphorylates and inactivates NtrC.</text>
</comment>
<comment type="catalytic activity">
    <reaction evidence="1">
        <text>ATP + protein L-histidine = ADP + protein N-phospho-L-histidine.</text>
        <dbReference type="EC" id="2.7.13.3"/>
    </reaction>
</comment>
<comment type="subcellular location">
    <subcellularLocation>
        <location evidence="1">Cytoplasm</location>
    </subcellularLocation>
</comment>
<comment type="PTM">
    <text evidence="1">Autophosphorylated.</text>
</comment>
<evidence type="ECO:0000250" key="1">
    <source>
        <dbReference type="UniProtKB" id="P0AFB5"/>
    </source>
</evidence>
<evidence type="ECO:0000255" key="2">
    <source>
        <dbReference type="PROSITE-ProRule" id="PRU00107"/>
    </source>
</evidence>
<evidence type="ECO:0000255" key="3">
    <source>
        <dbReference type="PROSITE-ProRule" id="PRU00140"/>
    </source>
</evidence>
<evidence type="ECO:0000256" key="4">
    <source>
        <dbReference type="SAM" id="MobiDB-lite"/>
    </source>
</evidence>
<proteinExistence type="inferred from homology"/>
<feature type="chain" id="PRO_0000074828" description="Sensory histidine kinase/phosphatase NtrB">
    <location>
        <begin position="1"/>
        <end position="400"/>
    </location>
</feature>
<feature type="domain" description="PAS" evidence="3">
    <location>
        <begin position="29"/>
        <end position="99"/>
    </location>
</feature>
<feature type="domain" description="Histidine kinase" evidence="2">
    <location>
        <begin position="163"/>
        <end position="381"/>
    </location>
</feature>
<feature type="region of interest" description="Disordered" evidence="4">
    <location>
        <begin position="1"/>
        <end position="27"/>
    </location>
</feature>
<feature type="compositionally biased region" description="Low complexity" evidence="4">
    <location>
        <begin position="1"/>
        <end position="10"/>
    </location>
</feature>
<feature type="compositionally biased region" description="Low complexity" evidence="4">
    <location>
        <begin position="18"/>
        <end position="27"/>
    </location>
</feature>
<feature type="modified residue" description="Phosphohistidine; by autocatalysis" evidence="2">
    <location>
        <position position="166"/>
    </location>
</feature>
<dbReference type="EC" id="2.7.13.3" evidence="1"/>
<dbReference type="EC" id="3.1.3.-" evidence="1"/>
<dbReference type="EMBL" id="Z37984">
    <property type="protein sequence ID" value="CAA86064.1"/>
    <property type="molecule type" value="Genomic_DNA"/>
</dbReference>
<dbReference type="PIR" id="I39493">
    <property type="entry name" value="I39493"/>
</dbReference>
<dbReference type="RefSeq" id="WP_035675954.1">
    <property type="nucleotide sequence ID" value="NZ_CP012915.1"/>
</dbReference>
<dbReference type="SMR" id="P45670"/>
<dbReference type="GeneID" id="56453394"/>
<dbReference type="BRENDA" id="2.7.13.3">
    <property type="organism ID" value="611"/>
</dbReference>
<dbReference type="GO" id="GO:0005737">
    <property type="term" value="C:cytoplasm"/>
    <property type="evidence" value="ECO:0007669"/>
    <property type="project" value="UniProtKB-SubCell"/>
</dbReference>
<dbReference type="GO" id="GO:0005524">
    <property type="term" value="F:ATP binding"/>
    <property type="evidence" value="ECO:0007669"/>
    <property type="project" value="UniProtKB-KW"/>
</dbReference>
<dbReference type="GO" id="GO:0016787">
    <property type="term" value="F:hydrolase activity"/>
    <property type="evidence" value="ECO:0007669"/>
    <property type="project" value="UniProtKB-KW"/>
</dbReference>
<dbReference type="GO" id="GO:0000155">
    <property type="term" value="F:phosphorelay sensor kinase activity"/>
    <property type="evidence" value="ECO:0007669"/>
    <property type="project" value="InterPro"/>
</dbReference>
<dbReference type="GO" id="GO:0009399">
    <property type="term" value="P:nitrogen fixation"/>
    <property type="evidence" value="ECO:0007669"/>
    <property type="project" value="UniProtKB-KW"/>
</dbReference>
<dbReference type="GO" id="GO:0006355">
    <property type="term" value="P:regulation of DNA-templated transcription"/>
    <property type="evidence" value="ECO:0007669"/>
    <property type="project" value="InterPro"/>
</dbReference>
<dbReference type="CDD" id="cd16918">
    <property type="entry name" value="HATPase_Glnl-NtrB-like"/>
    <property type="match status" value="1"/>
</dbReference>
<dbReference type="CDD" id="cd00082">
    <property type="entry name" value="HisKA"/>
    <property type="match status" value="1"/>
</dbReference>
<dbReference type="CDD" id="cd00130">
    <property type="entry name" value="PAS"/>
    <property type="match status" value="1"/>
</dbReference>
<dbReference type="Gene3D" id="1.10.287.130">
    <property type="match status" value="1"/>
</dbReference>
<dbReference type="Gene3D" id="3.30.565.10">
    <property type="entry name" value="Histidine kinase-like ATPase, C-terminal domain"/>
    <property type="match status" value="1"/>
</dbReference>
<dbReference type="Gene3D" id="3.30.450.20">
    <property type="entry name" value="PAS domain"/>
    <property type="match status" value="1"/>
</dbReference>
<dbReference type="InterPro" id="IPR036890">
    <property type="entry name" value="HATPase_C_sf"/>
</dbReference>
<dbReference type="InterPro" id="IPR005467">
    <property type="entry name" value="His_kinase_dom"/>
</dbReference>
<dbReference type="InterPro" id="IPR003661">
    <property type="entry name" value="HisK_dim/P_dom"/>
</dbReference>
<dbReference type="InterPro" id="IPR036097">
    <property type="entry name" value="HisK_dim/P_sf"/>
</dbReference>
<dbReference type="InterPro" id="IPR000014">
    <property type="entry name" value="PAS"/>
</dbReference>
<dbReference type="InterPro" id="IPR035965">
    <property type="entry name" value="PAS-like_dom_sf"/>
</dbReference>
<dbReference type="InterPro" id="IPR013767">
    <property type="entry name" value="PAS_fold"/>
</dbReference>
<dbReference type="InterPro" id="IPR004358">
    <property type="entry name" value="Sig_transdc_His_kin-like_C"/>
</dbReference>
<dbReference type="NCBIfam" id="TIGR00229">
    <property type="entry name" value="sensory_box"/>
    <property type="match status" value="1"/>
</dbReference>
<dbReference type="PANTHER" id="PTHR43065:SF10">
    <property type="entry name" value="PEROXIDE STRESS-ACTIVATED HISTIDINE KINASE MAK3"/>
    <property type="match status" value="1"/>
</dbReference>
<dbReference type="PANTHER" id="PTHR43065">
    <property type="entry name" value="SENSOR HISTIDINE KINASE"/>
    <property type="match status" value="1"/>
</dbReference>
<dbReference type="Pfam" id="PF02518">
    <property type="entry name" value="HATPase_c"/>
    <property type="match status" value="1"/>
</dbReference>
<dbReference type="Pfam" id="PF00512">
    <property type="entry name" value="HisKA"/>
    <property type="match status" value="1"/>
</dbReference>
<dbReference type="Pfam" id="PF00989">
    <property type="entry name" value="PAS"/>
    <property type="match status" value="1"/>
</dbReference>
<dbReference type="PRINTS" id="PR00344">
    <property type="entry name" value="BCTRLSENSOR"/>
</dbReference>
<dbReference type="SMART" id="SM00387">
    <property type="entry name" value="HATPase_c"/>
    <property type="match status" value="1"/>
</dbReference>
<dbReference type="SMART" id="SM00388">
    <property type="entry name" value="HisKA"/>
    <property type="match status" value="1"/>
</dbReference>
<dbReference type="SMART" id="SM00091">
    <property type="entry name" value="PAS"/>
    <property type="match status" value="1"/>
</dbReference>
<dbReference type="SUPFAM" id="SSF55874">
    <property type="entry name" value="ATPase domain of HSP90 chaperone/DNA topoisomerase II/histidine kinase"/>
    <property type="match status" value="1"/>
</dbReference>
<dbReference type="SUPFAM" id="SSF47384">
    <property type="entry name" value="Homodimeric domain of signal transducing histidine kinase"/>
    <property type="match status" value="1"/>
</dbReference>
<dbReference type="SUPFAM" id="SSF55785">
    <property type="entry name" value="PYP-like sensor domain (PAS domain)"/>
    <property type="match status" value="1"/>
</dbReference>
<dbReference type="PROSITE" id="PS50109">
    <property type="entry name" value="HIS_KIN"/>
    <property type="match status" value="1"/>
</dbReference>
<dbReference type="PROSITE" id="PS50112">
    <property type="entry name" value="PAS"/>
    <property type="match status" value="1"/>
</dbReference>
<reference key="1">
    <citation type="journal article" date="1995" name="Can. J. Microbiol.">
        <title>The ntrBC genes of Azospirillum brasilense are part of a nifR3-like-ntrB-ntrC operon and are negatively regulated.</title>
        <authorList>
            <person name="Machado H.B."/>
            <person name="Yates M.G."/>
            <person name="Funayama S."/>
            <person name="Rigo L.U."/>
            <person name="Steffens M.B.R."/>
            <person name="Souza E.M."/>
            <person name="Pedrosa F.O."/>
        </authorList>
    </citation>
    <scope>NUCLEOTIDE SEQUENCE [GENOMIC DNA]</scope>
    <source>
        <strain>ATCC 29145 / DSM 1690 / IMET 11303 / Sp7</strain>
    </source>
</reference>
<protein>
    <recommendedName>
        <fullName evidence="1">Sensory histidine kinase/phosphatase NtrB</fullName>
        <ecNumber evidence="1">2.7.13.3</ecNumber>
        <ecNumber evidence="1">3.1.3.-</ecNumber>
    </recommendedName>
    <alternativeName>
        <fullName evidence="1">Nitrogen regulation protein NR(II)</fullName>
    </alternativeName>
    <alternativeName>
        <fullName evidence="1">Nitrogen regulator II</fullName>
        <shortName evidence="1">NRII</shortName>
    </alternativeName>
</protein>